<sequence>MSDTQHSCVIIGIAGASASGKSLIAQTIYEELVAELGAGQIGVITEDCYYRDQTHLTMEERVKTNYDHPNALDHDLLVQHLSQLVKGDAVNIPQYSYTEHTRMNDVTPFAPRRVIILEGILLLTDSRLRDLMDASIFMDTPLDICLLRRLVRDVQERGRTMDSVLKQYQKTVRPMFLQFIEPSKQYADVIVPRGGKNRIAIDMLKARILHMLIG</sequence>
<gene>
    <name evidence="1" type="primary">udk</name>
    <name type="ordered locus">ASA_2068</name>
</gene>
<accession>A4SML3</accession>
<proteinExistence type="inferred from homology"/>
<dbReference type="EC" id="2.7.1.48" evidence="1"/>
<dbReference type="EMBL" id="CP000644">
    <property type="protein sequence ID" value="ABO90135.1"/>
    <property type="molecule type" value="Genomic_DNA"/>
</dbReference>
<dbReference type="RefSeq" id="WP_011898710.1">
    <property type="nucleotide sequence ID" value="NC_009348.1"/>
</dbReference>
<dbReference type="SMR" id="A4SML3"/>
<dbReference type="STRING" id="29491.GCA_000820065_00677"/>
<dbReference type="KEGG" id="asa:ASA_2068"/>
<dbReference type="PATRIC" id="fig|382245.13.peg.2031"/>
<dbReference type="eggNOG" id="COG0572">
    <property type="taxonomic scope" value="Bacteria"/>
</dbReference>
<dbReference type="HOGENOM" id="CLU_021278_1_2_6"/>
<dbReference type="UniPathway" id="UPA00574">
    <property type="reaction ID" value="UER00637"/>
</dbReference>
<dbReference type="UniPathway" id="UPA00579">
    <property type="reaction ID" value="UER00640"/>
</dbReference>
<dbReference type="Proteomes" id="UP000000225">
    <property type="component" value="Chromosome"/>
</dbReference>
<dbReference type="GO" id="GO:0005737">
    <property type="term" value="C:cytoplasm"/>
    <property type="evidence" value="ECO:0007669"/>
    <property type="project" value="UniProtKB-SubCell"/>
</dbReference>
<dbReference type="GO" id="GO:0005524">
    <property type="term" value="F:ATP binding"/>
    <property type="evidence" value="ECO:0007669"/>
    <property type="project" value="UniProtKB-UniRule"/>
</dbReference>
<dbReference type="GO" id="GO:0043771">
    <property type="term" value="F:cytidine kinase activity"/>
    <property type="evidence" value="ECO:0007669"/>
    <property type="project" value="RHEA"/>
</dbReference>
<dbReference type="GO" id="GO:0004849">
    <property type="term" value="F:uridine kinase activity"/>
    <property type="evidence" value="ECO:0007669"/>
    <property type="project" value="UniProtKB-UniRule"/>
</dbReference>
<dbReference type="GO" id="GO:0044211">
    <property type="term" value="P:CTP salvage"/>
    <property type="evidence" value="ECO:0007669"/>
    <property type="project" value="UniProtKB-UniRule"/>
</dbReference>
<dbReference type="GO" id="GO:0044206">
    <property type="term" value="P:UMP salvage"/>
    <property type="evidence" value="ECO:0007669"/>
    <property type="project" value="UniProtKB-UniRule"/>
</dbReference>
<dbReference type="CDD" id="cd02023">
    <property type="entry name" value="UMPK"/>
    <property type="match status" value="1"/>
</dbReference>
<dbReference type="Gene3D" id="3.40.50.300">
    <property type="entry name" value="P-loop containing nucleotide triphosphate hydrolases"/>
    <property type="match status" value="1"/>
</dbReference>
<dbReference type="HAMAP" id="MF_00551">
    <property type="entry name" value="Uridine_kinase"/>
    <property type="match status" value="1"/>
</dbReference>
<dbReference type="InterPro" id="IPR027417">
    <property type="entry name" value="P-loop_NTPase"/>
</dbReference>
<dbReference type="InterPro" id="IPR006083">
    <property type="entry name" value="PRK/URK"/>
</dbReference>
<dbReference type="InterPro" id="IPR026008">
    <property type="entry name" value="Uridine_kinase"/>
</dbReference>
<dbReference type="InterPro" id="IPR000764">
    <property type="entry name" value="Uridine_kinase-like"/>
</dbReference>
<dbReference type="NCBIfam" id="NF004018">
    <property type="entry name" value="PRK05480.1"/>
    <property type="match status" value="1"/>
</dbReference>
<dbReference type="NCBIfam" id="TIGR00235">
    <property type="entry name" value="udk"/>
    <property type="match status" value="1"/>
</dbReference>
<dbReference type="PANTHER" id="PTHR10285">
    <property type="entry name" value="URIDINE KINASE"/>
    <property type="match status" value="1"/>
</dbReference>
<dbReference type="Pfam" id="PF00485">
    <property type="entry name" value="PRK"/>
    <property type="match status" value="1"/>
</dbReference>
<dbReference type="PRINTS" id="PR00988">
    <property type="entry name" value="URIDINKINASE"/>
</dbReference>
<dbReference type="SUPFAM" id="SSF52540">
    <property type="entry name" value="P-loop containing nucleoside triphosphate hydrolases"/>
    <property type="match status" value="1"/>
</dbReference>
<reference key="1">
    <citation type="journal article" date="2008" name="BMC Genomics">
        <title>The genome of Aeromonas salmonicida subsp. salmonicida A449: insights into the evolution of a fish pathogen.</title>
        <authorList>
            <person name="Reith M.E."/>
            <person name="Singh R.K."/>
            <person name="Curtis B."/>
            <person name="Boyd J.M."/>
            <person name="Bouevitch A."/>
            <person name="Kimball J."/>
            <person name="Munholland J."/>
            <person name="Murphy C."/>
            <person name="Sarty D."/>
            <person name="Williams J."/>
            <person name="Nash J.H."/>
            <person name="Johnson S.C."/>
            <person name="Brown L.L."/>
        </authorList>
    </citation>
    <scope>NUCLEOTIDE SEQUENCE [LARGE SCALE GENOMIC DNA]</scope>
    <source>
        <strain>A449</strain>
    </source>
</reference>
<evidence type="ECO:0000255" key="1">
    <source>
        <dbReference type="HAMAP-Rule" id="MF_00551"/>
    </source>
</evidence>
<name>URK_AERS4</name>
<keyword id="KW-0067">ATP-binding</keyword>
<keyword id="KW-0963">Cytoplasm</keyword>
<keyword id="KW-0418">Kinase</keyword>
<keyword id="KW-0547">Nucleotide-binding</keyword>
<keyword id="KW-0808">Transferase</keyword>
<organism>
    <name type="scientific">Aeromonas salmonicida (strain A449)</name>
    <dbReference type="NCBI Taxonomy" id="382245"/>
    <lineage>
        <taxon>Bacteria</taxon>
        <taxon>Pseudomonadati</taxon>
        <taxon>Pseudomonadota</taxon>
        <taxon>Gammaproteobacteria</taxon>
        <taxon>Aeromonadales</taxon>
        <taxon>Aeromonadaceae</taxon>
        <taxon>Aeromonas</taxon>
    </lineage>
</organism>
<feature type="chain" id="PRO_1000017859" description="Uridine kinase">
    <location>
        <begin position="1"/>
        <end position="214"/>
    </location>
</feature>
<feature type="binding site" evidence="1">
    <location>
        <begin position="15"/>
        <end position="22"/>
    </location>
    <ligand>
        <name>ATP</name>
        <dbReference type="ChEBI" id="CHEBI:30616"/>
    </ligand>
</feature>
<protein>
    <recommendedName>
        <fullName evidence="1">Uridine kinase</fullName>
        <ecNumber evidence="1">2.7.1.48</ecNumber>
    </recommendedName>
    <alternativeName>
        <fullName evidence="1">Cytidine monophosphokinase</fullName>
    </alternativeName>
    <alternativeName>
        <fullName evidence="1">Uridine monophosphokinase</fullName>
    </alternativeName>
</protein>
<comment type="catalytic activity">
    <reaction evidence="1">
        <text>uridine + ATP = UMP + ADP + H(+)</text>
        <dbReference type="Rhea" id="RHEA:16825"/>
        <dbReference type="ChEBI" id="CHEBI:15378"/>
        <dbReference type="ChEBI" id="CHEBI:16704"/>
        <dbReference type="ChEBI" id="CHEBI:30616"/>
        <dbReference type="ChEBI" id="CHEBI:57865"/>
        <dbReference type="ChEBI" id="CHEBI:456216"/>
        <dbReference type="EC" id="2.7.1.48"/>
    </reaction>
</comment>
<comment type="catalytic activity">
    <reaction evidence="1">
        <text>cytidine + ATP = CMP + ADP + H(+)</text>
        <dbReference type="Rhea" id="RHEA:24674"/>
        <dbReference type="ChEBI" id="CHEBI:15378"/>
        <dbReference type="ChEBI" id="CHEBI:17562"/>
        <dbReference type="ChEBI" id="CHEBI:30616"/>
        <dbReference type="ChEBI" id="CHEBI:60377"/>
        <dbReference type="ChEBI" id="CHEBI:456216"/>
        <dbReference type="EC" id="2.7.1.48"/>
    </reaction>
</comment>
<comment type="pathway">
    <text evidence="1">Pyrimidine metabolism; CTP biosynthesis via salvage pathway; CTP from cytidine: step 1/3.</text>
</comment>
<comment type="pathway">
    <text evidence="1">Pyrimidine metabolism; UMP biosynthesis via salvage pathway; UMP from uridine: step 1/1.</text>
</comment>
<comment type="subcellular location">
    <subcellularLocation>
        <location evidence="1">Cytoplasm</location>
    </subcellularLocation>
</comment>
<comment type="similarity">
    <text evidence="1">Belongs to the uridine kinase family.</text>
</comment>